<accession>A1A998</accession>
<reference key="1">
    <citation type="journal article" date="2007" name="J. Bacteriol.">
        <title>The genome sequence of avian pathogenic Escherichia coli strain O1:K1:H7 shares strong similarities with human extraintestinal pathogenic E. coli genomes.</title>
        <authorList>
            <person name="Johnson T.J."/>
            <person name="Kariyawasam S."/>
            <person name="Wannemuehler Y."/>
            <person name="Mangiamele P."/>
            <person name="Johnson S.J."/>
            <person name="Doetkott C."/>
            <person name="Skyberg J.A."/>
            <person name="Lynne A.M."/>
            <person name="Johnson J.R."/>
            <person name="Nolan L.K."/>
        </authorList>
    </citation>
    <scope>NUCLEOTIDE SEQUENCE [LARGE SCALE GENOMIC DNA]</scope>
</reference>
<feature type="chain" id="PRO_0000282007" description="23S rRNA (uracil(747)-C(5))-methyltransferase RlmC">
    <location>
        <begin position="1"/>
        <end position="375"/>
    </location>
</feature>
<feature type="active site" description="Nucleophile" evidence="1">
    <location>
        <position position="334"/>
    </location>
</feature>
<feature type="binding site" evidence="1">
    <location>
        <position position="3"/>
    </location>
    <ligand>
        <name>[4Fe-4S] cluster</name>
        <dbReference type="ChEBI" id="CHEBI:49883"/>
    </ligand>
</feature>
<feature type="binding site" evidence="1">
    <location>
        <position position="11"/>
    </location>
    <ligand>
        <name>[4Fe-4S] cluster</name>
        <dbReference type="ChEBI" id="CHEBI:49883"/>
    </ligand>
</feature>
<feature type="binding site" evidence="1">
    <location>
        <position position="14"/>
    </location>
    <ligand>
        <name>[4Fe-4S] cluster</name>
        <dbReference type="ChEBI" id="CHEBI:49883"/>
    </ligand>
</feature>
<feature type="binding site" evidence="1">
    <location>
        <position position="87"/>
    </location>
    <ligand>
        <name>[4Fe-4S] cluster</name>
        <dbReference type="ChEBI" id="CHEBI:49883"/>
    </ligand>
</feature>
<feature type="binding site" evidence="1">
    <location>
        <position position="212"/>
    </location>
    <ligand>
        <name>S-adenosyl-L-methionine</name>
        <dbReference type="ChEBI" id="CHEBI:59789"/>
    </ligand>
</feature>
<feature type="binding site" evidence="1">
    <location>
        <position position="241"/>
    </location>
    <ligand>
        <name>S-adenosyl-L-methionine</name>
        <dbReference type="ChEBI" id="CHEBI:59789"/>
    </ligand>
</feature>
<feature type="binding site" evidence="1">
    <location>
        <position position="262"/>
    </location>
    <ligand>
        <name>S-adenosyl-L-methionine</name>
        <dbReference type="ChEBI" id="CHEBI:59789"/>
    </ligand>
</feature>
<feature type="binding site" evidence="1">
    <location>
        <position position="307"/>
    </location>
    <ligand>
        <name>S-adenosyl-L-methionine</name>
        <dbReference type="ChEBI" id="CHEBI:59789"/>
    </ligand>
</feature>
<keyword id="KW-0004">4Fe-4S</keyword>
<keyword id="KW-0408">Iron</keyword>
<keyword id="KW-0411">Iron-sulfur</keyword>
<keyword id="KW-0479">Metal-binding</keyword>
<keyword id="KW-0489">Methyltransferase</keyword>
<keyword id="KW-1185">Reference proteome</keyword>
<keyword id="KW-0698">rRNA processing</keyword>
<keyword id="KW-0949">S-adenosyl-L-methionine</keyword>
<keyword id="KW-0808">Transferase</keyword>
<sequence>MQCALYDAGRCRSCQWITQPIPEQLSAKTVDLKNLLADFPVEEWCAPVSGPEQGFRNKAKMVVSGSVEKPLLGMLHRDGTPEDLCDCPLYPASFAPVFAALKPFIARAGLTPYNVARKRGELKYILLTESQSDGGMMLRFVLRSDTKLAQLRKALPWLQEQLPQLKVITVNIQPVHMAIMEGETEIYLTEQQALAERFNDVPLWIRPQSFFQTNPAVASQLYATARDWVRQLPVKHMWDLFCGVGGFGLHCATPDMQLTGIEIAPEAIACAKQSAAELGLTRLQFQALDSTQFATAQGEVPELVLVNPPRRGIGKPLCDYLSTMAPRFIIYSSCNAQTMAKDIRELPGYRIERVQLFDMFPHTAHYEVLTLLVKQ</sequence>
<organism>
    <name type="scientific">Escherichia coli O1:K1 / APEC</name>
    <dbReference type="NCBI Taxonomy" id="405955"/>
    <lineage>
        <taxon>Bacteria</taxon>
        <taxon>Pseudomonadati</taxon>
        <taxon>Pseudomonadota</taxon>
        <taxon>Gammaproteobacteria</taxon>
        <taxon>Enterobacterales</taxon>
        <taxon>Enterobacteriaceae</taxon>
        <taxon>Escherichia</taxon>
    </lineage>
</organism>
<proteinExistence type="inferred from homology"/>
<protein>
    <recommendedName>
        <fullName evidence="1">23S rRNA (uracil(747)-C(5))-methyltransferase RlmC</fullName>
        <ecNumber evidence="1">2.1.1.189</ecNumber>
    </recommendedName>
    <alternativeName>
        <fullName evidence="1">23S rRNA(m5U747)-methyltransferase</fullName>
    </alternativeName>
</protein>
<evidence type="ECO:0000255" key="1">
    <source>
        <dbReference type="HAMAP-Rule" id="MF_01012"/>
    </source>
</evidence>
<dbReference type="EC" id="2.1.1.189" evidence="1"/>
<dbReference type="EMBL" id="CP000468">
    <property type="protein sequence ID" value="ABJ00238.1"/>
    <property type="molecule type" value="Genomic_DNA"/>
</dbReference>
<dbReference type="RefSeq" id="WP_001149763.1">
    <property type="nucleotide sequence ID" value="NZ_CADILS010000017.1"/>
</dbReference>
<dbReference type="SMR" id="A1A998"/>
<dbReference type="KEGG" id="ecv:APECO1_1234"/>
<dbReference type="HOGENOM" id="CLU_014689_0_0_6"/>
<dbReference type="Proteomes" id="UP000008216">
    <property type="component" value="Chromosome"/>
</dbReference>
<dbReference type="GO" id="GO:0051539">
    <property type="term" value="F:4 iron, 4 sulfur cluster binding"/>
    <property type="evidence" value="ECO:0007669"/>
    <property type="project" value="UniProtKB-KW"/>
</dbReference>
<dbReference type="GO" id="GO:0005506">
    <property type="term" value="F:iron ion binding"/>
    <property type="evidence" value="ECO:0007669"/>
    <property type="project" value="UniProtKB-UniRule"/>
</dbReference>
<dbReference type="GO" id="GO:0070041">
    <property type="term" value="F:rRNA (uridine-C5-)-methyltransferase activity"/>
    <property type="evidence" value="ECO:0007669"/>
    <property type="project" value="UniProtKB-UniRule"/>
</dbReference>
<dbReference type="GO" id="GO:0070475">
    <property type="term" value="P:rRNA base methylation"/>
    <property type="evidence" value="ECO:0007669"/>
    <property type="project" value="TreeGrafter"/>
</dbReference>
<dbReference type="CDD" id="cd02440">
    <property type="entry name" value="AdoMet_MTases"/>
    <property type="match status" value="1"/>
</dbReference>
<dbReference type="FunFam" id="2.40.50.1070:FF:000002">
    <property type="entry name" value="23S rRNA (uracil(747)-C(5))-methyltransferase RlmC"/>
    <property type="match status" value="1"/>
</dbReference>
<dbReference type="FunFam" id="3.40.50.150:FF:000049">
    <property type="entry name" value="23S rRNA (uracil(747)-C(5))-methyltransferase RlmC"/>
    <property type="match status" value="1"/>
</dbReference>
<dbReference type="Gene3D" id="2.40.50.1070">
    <property type="match status" value="1"/>
</dbReference>
<dbReference type="Gene3D" id="3.40.50.150">
    <property type="entry name" value="Vaccinia Virus protein VP39"/>
    <property type="match status" value="1"/>
</dbReference>
<dbReference type="HAMAP" id="MF_01012">
    <property type="entry name" value="23SrRNA_methyltr_RlmC"/>
    <property type="match status" value="1"/>
</dbReference>
<dbReference type="InterPro" id="IPR011825">
    <property type="entry name" value="23SrRNA_MeTrfase_RlmC"/>
</dbReference>
<dbReference type="InterPro" id="IPR030390">
    <property type="entry name" value="MeTrfase_TrmA_AS"/>
</dbReference>
<dbReference type="InterPro" id="IPR030391">
    <property type="entry name" value="MeTrfase_TrmA_CS"/>
</dbReference>
<dbReference type="InterPro" id="IPR029063">
    <property type="entry name" value="SAM-dependent_MTases_sf"/>
</dbReference>
<dbReference type="InterPro" id="IPR010280">
    <property type="entry name" value="U5_MeTrfase_fam"/>
</dbReference>
<dbReference type="NCBIfam" id="TIGR02085">
    <property type="entry name" value="meth_trns_rumB"/>
    <property type="match status" value="1"/>
</dbReference>
<dbReference type="PANTHER" id="PTHR11061">
    <property type="entry name" value="RNA M5U METHYLTRANSFERASE"/>
    <property type="match status" value="1"/>
</dbReference>
<dbReference type="PANTHER" id="PTHR11061:SF30">
    <property type="entry name" value="TRNA (URACIL(54)-C(5))-METHYLTRANSFERASE"/>
    <property type="match status" value="1"/>
</dbReference>
<dbReference type="Pfam" id="PF05958">
    <property type="entry name" value="tRNA_U5-meth_tr"/>
    <property type="match status" value="1"/>
</dbReference>
<dbReference type="SUPFAM" id="SSF53335">
    <property type="entry name" value="S-adenosyl-L-methionine-dependent methyltransferases"/>
    <property type="match status" value="1"/>
</dbReference>
<dbReference type="PROSITE" id="PS51687">
    <property type="entry name" value="SAM_MT_RNA_M5U"/>
    <property type="match status" value="1"/>
</dbReference>
<dbReference type="PROSITE" id="PS01230">
    <property type="entry name" value="TRMA_1"/>
    <property type="match status" value="1"/>
</dbReference>
<dbReference type="PROSITE" id="PS01231">
    <property type="entry name" value="TRMA_2"/>
    <property type="match status" value="1"/>
</dbReference>
<gene>
    <name evidence="1" type="primary">rlmC</name>
    <name type="synonym">rumB</name>
    <name type="ordered locus">Ecok1_07440</name>
    <name type="ORF">APECO1_1234</name>
</gene>
<name>RLMC_ECOK1</name>
<comment type="function">
    <text evidence="1">Catalyzes the formation of 5-methyl-uridine at position 747 (m5U747) in 23S rRNA.</text>
</comment>
<comment type="catalytic activity">
    <reaction evidence="1">
        <text>uridine(747) in 23S rRNA + S-adenosyl-L-methionine = 5-methyluridine(747) in 23S rRNA + S-adenosyl-L-homocysteine + H(+)</text>
        <dbReference type="Rhea" id="RHEA:42628"/>
        <dbReference type="Rhea" id="RHEA-COMP:10154"/>
        <dbReference type="Rhea" id="RHEA-COMP:10155"/>
        <dbReference type="ChEBI" id="CHEBI:15378"/>
        <dbReference type="ChEBI" id="CHEBI:57856"/>
        <dbReference type="ChEBI" id="CHEBI:59789"/>
        <dbReference type="ChEBI" id="CHEBI:65315"/>
        <dbReference type="ChEBI" id="CHEBI:74447"/>
        <dbReference type="EC" id="2.1.1.189"/>
    </reaction>
</comment>
<comment type="similarity">
    <text evidence="1">Belongs to the class I-like SAM-binding methyltransferase superfamily. RNA M5U methyltransferase family. RlmC subfamily.</text>
</comment>